<reference key="1">
    <citation type="submission" date="2005-10" db="EMBL/GenBank/DDBJ databases">
        <title>Complete sequence of Pelobacter carbinolicus DSM 2380.</title>
        <authorList>
            <person name="Copeland A."/>
            <person name="Lucas S."/>
            <person name="Lapidus A."/>
            <person name="Barry K."/>
            <person name="Detter J.C."/>
            <person name="Glavina T."/>
            <person name="Hammon N."/>
            <person name="Israni S."/>
            <person name="Pitluck S."/>
            <person name="Chertkov O."/>
            <person name="Schmutz J."/>
            <person name="Larimer F."/>
            <person name="Land M."/>
            <person name="Kyrpides N."/>
            <person name="Ivanova N."/>
            <person name="Richardson P."/>
        </authorList>
    </citation>
    <scope>NUCLEOTIDE SEQUENCE [LARGE SCALE GENOMIC DNA]</scope>
    <source>
        <strain>DSM 2380 / NBRC 103641 / GraBd1</strain>
    </source>
</reference>
<accession>Q3A346</accession>
<sequence>MLLVIDVGNTNTVVGLYEGQTLAYNWRITTDKGRTGDEYAMLLHELLRLAGVTFDRIEDVIVSSVVPPTLQAIESLCRKYVGRSPYVVGPGIKTGMPILYENPREVGADRIVNAVAAFARWQRSLIVVDFGTATTFDYINAKGQYHGGAIAPGLKISADALFDKASKLPRVEVSRPPTVVAKNTVNSIQAGLFYGYVGLVDGIVERMRKETRDDPLVVATGGLATLIADETQTIHEVESDLTLEGLRILYLRNKG</sequence>
<dbReference type="EC" id="2.7.1.33" evidence="1"/>
<dbReference type="EMBL" id="CP000142">
    <property type="protein sequence ID" value="ABA89211.1"/>
    <property type="molecule type" value="Genomic_DNA"/>
</dbReference>
<dbReference type="RefSeq" id="WP_011341717.1">
    <property type="nucleotide sequence ID" value="NC_007498.2"/>
</dbReference>
<dbReference type="SMR" id="Q3A346"/>
<dbReference type="STRING" id="338963.Pcar_1970"/>
<dbReference type="KEGG" id="pca:Pcar_1970"/>
<dbReference type="eggNOG" id="COG1521">
    <property type="taxonomic scope" value="Bacteria"/>
</dbReference>
<dbReference type="HOGENOM" id="CLU_066627_1_0_7"/>
<dbReference type="OrthoDB" id="9804707at2"/>
<dbReference type="UniPathway" id="UPA00241">
    <property type="reaction ID" value="UER00352"/>
</dbReference>
<dbReference type="Proteomes" id="UP000002534">
    <property type="component" value="Chromosome"/>
</dbReference>
<dbReference type="GO" id="GO:0005737">
    <property type="term" value="C:cytoplasm"/>
    <property type="evidence" value="ECO:0007669"/>
    <property type="project" value="UniProtKB-SubCell"/>
</dbReference>
<dbReference type="GO" id="GO:0005524">
    <property type="term" value="F:ATP binding"/>
    <property type="evidence" value="ECO:0007669"/>
    <property type="project" value="UniProtKB-UniRule"/>
</dbReference>
<dbReference type="GO" id="GO:0046872">
    <property type="term" value="F:metal ion binding"/>
    <property type="evidence" value="ECO:0007669"/>
    <property type="project" value="UniProtKB-KW"/>
</dbReference>
<dbReference type="GO" id="GO:0004594">
    <property type="term" value="F:pantothenate kinase activity"/>
    <property type="evidence" value="ECO:0007669"/>
    <property type="project" value="UniProtKB-UniRule"/>
</dbReference>
<dbReference type="GO" id="GO:0015937">
    <property type="term" value="P:coenzyme A biosynthetic process"/>
    <property type="evidence" value="ECO:0007669"/>
    <property type="project" value="UniProtKB-UniRule"/>
</dbReference>
<dbReference type="CDD" id="cd24015">
    <property type="entry name" value="ASKHA_NBD_PanK-III"/>
    <property type="match status" value="1"/>
</dbReference>
<dbReference type="Gene3D" id="3.30.420.40">
    <property type="match status" value="2"/>
</dbReference>
<dbReference type="HAMAP" id="MF_01274">
    <property type="entry name" value="Pantothen_kinase_3"/>
    <property type="match status" value="1"/>
</dbReference>
<dbReference type="InterPro" id="IPR043129">
    <property type="entry name" value="ATPase_NBD"/>
</dbReference>
<dbReference type="InterPro" id="IPR004619">
    <property type="entry name" value="Type_III_PanK"/>
</dbReference>
<dbReference type="NCBIfam" id="TIGR00671">
    <property type="entry name" value="baf"/>
    <property type="match status" value="1"/>
</dbReference>
<dbReference type="NCBIfam" id="NF009848">
    <property type="entry name" value="PRK13318.1-6"/>
    <property type="match status" value="1"/>
</dbReference>
<dbReference type="NCBIfam" id="NF009855">
    <property type="entry name" value="PRK13321.1"/>
    <property type="match status" value="1"/>
</dbReference>
<dbReference type="PANTHER" id="PTHR34265">
    <property type="entry name" value="TYPE III PANTOTHENATE KINASE"/>
    <property type="match status" value="1"/>
</dbReference>
<dbReference type="PANTHER" id="PTHR34265:SF1">
    <property type="entry name" value="TYPE III PANTOTHENATE KINASE"/>
    <property type="match status" value="1"/>
</dbReference>
<dbReference type="Pfam" id="PF03309">
    <property type="entry name" value="Pan_kinase"/>
    <property type="match status" value="1"/>
</dbReference>
<dbReference type="SUPFAM" id="SSF53067">
    <property type="entry name" value="Actin-like ATPase domain"/>
    <property type="match status" value="2"/>
</dbReference>
<keyword id="KW-0067">ATP-binding</keyword>
<keyword id="KW-0173">Coenzyme A biosynthesis</keyword>
<keyword id="KW-0963">Cytoplasm</keyword>
<keyword id="KW-0418">Kinase</keyword>
<keyword id="KW-0479">Metal-binding</keyword>
<keyword id="KW-0547">Nucleotide-binding</keyword>
<keyword id="KW-0630">Potassium</keyword>
<keyword id="KW-1185">Reference proteome</keyword>
<keyword id="KW-0808">Transferase</keyword>
<feature type="chain" id="PRO_0000267573" description="Type III pantothenate kinase">
    <location>
        <begin position="1"/>
        <end position="255"/>
    </location>
</feature>
<feature type="active site" description="Proton acceptor" evidence="1">
    <location>
        <position position="109"/>
    </location>
</feature>
<feature type="binding site" evidence="1">
    <location>
        <begin position="6"/>
        <end position="13"/>
    </location>
    <ligand>
        <name>ATP</name>
        <dbReference type="ChEBI" id="CHEBI:30616"/>
    </ligand>
</feature>
<feature type="binding site" evidence="1">
    <location>
        <position position="100"/>
    </location>
    <ligand>
        <name>substrate</name>
    </ligand>
</feature>
<feature type="binding site" evidence="1">
    <location>
        <begin position="107"/>
        <end position="110"/>
    </location>
    <ligand>
        <name>substrate</name>
    </ligand>
</feature>
<feature type="binding site" evidence="1">
    <location>
        <position position="129"/>
    </location>
    <ligand>
        <name>K(+)</name>
        <dbReference type="ChEBI" id="CHEBI:29103"/>
    </ligand>
</feature>
<feature type="binding site" evidence="1">
    <location>
        <position position="132"/>
    </location>
    <ligand>
        <name>ATP</name>
        <dbReference type="ChEBI" id="CHEBI:30616"/>
    </ligand>
</feature>
<feature type="binding site" evidence="1">
    <location>
        <position position="184"/>
    </location>
    <ligand>
        <name>substrate</name>
    </ligand>
</feature>
<comment type="function">
    <text evidence="1">Catalyzes the phosphorylation of pantothenate (Pan), the first step in CoA biosynthesis.</text>
</comment>
<comment type="catalytic activity">
    <reaction evidence="1">
        <text>(R)-pantothenate + ATP = (R)-4'-phosphopantothenate + ADP + H(+)</text>
        <dbReference type="Rhea" id="RHEA:16373"/>
        <dbReference type="ChEBI" id="CHEBI:10986"/>
        <dbReference type="ChEBI" id="CHEBI:15378"/>
        <dbReference type="ChEBI" id="CHEBI:29032"/>
        <dbReference type="ChEBI" id="CHEBI:30616"/>
        <dbReference type="ChEBI" id="CHEBI:456216"/>
        <dbReference type="EC" id="2.7.1.33"/>
    </reaction>
</comment>
<comment type="cofactor">
    <cofactor evidence="1">
        <name>NH4(+)</name>
        <dbReference type="ChEBI" id="CHEBI:28938"/>
    </cofactor>
    <cofactor evidence="1">
        <name>K(+)</name>
        <dbReference type="ChEBI" id="CHEBI:29103"/>
    </cofactor>
    <text evidence="1">A monovalent cation. Ammonium or potassium.</text>
</comment>
<comment type="pathway">
    <text evidence="1">Cofactor biosynthesis; coenzyme A biosynthesis; CoA from (R)-pantothenate: step 1/5.</text>
</comment>
<comment type="subunit">
    <text evidence="1">Homodimer.</text>
</comment>
<comment type="subcellular location">
    <subcellularLocation>
        <location evidence="1">Cytoplasm</location>
    </subcellularLocation>
</comment>
<comment type="similarity">
    <text evidence="1">Belongs to the type III pantothenate kinase family.</text>
</comment>
<name>COAX_SYNC1</name>
<gene>
    <name evidence="1" type="primary">coaX</name>
    <name type="ordered locus">Pcar_1970</name>
</gene>
<protein>
    <recommendedName>
        <fullName evidence="1">Type III pantothenate kinase</fullName>
        <ecNumber evidence="1">2.7.1.33</ecNumber>
    </recommendedName>
    <alternativeName>
        <fullName evidence="1">PanK-III</fullName>
    </alternativeName>
    <alternativeName>
        <fullName evidence="1">Pantothenic acid kinase</fullName>
    </alternativeName>
</protein>
<organism>
    <name type="scientific">Syntrophotalea carbinolica (strain DSM 2380 / NBRC 103641 / GraBd1)</name>
    <name type="common">Pelobacter carbinolicus</name>
    <dbReference type="NCBI Taxonomy" id="338963"/>
    <lineage>
        <taxon>Bacteria</taxon>
        <taxon>Pseudomonadati</taxon>
        <taxon>Thermodesulfobacteriota</taxon>
        <taxon>Desulfuromonadia</taxon>
        <taxon>Desulfuromonadales</taxon>
        <taxon>Syntrophotaleaceae</taxon>
        <taxon>Syntrophotalea</taxon>
    </lineage>
</organism>
<evidence type="ECO:0000255" key="1">
    <source>
        <dbReference type="HAMAP-Rule" id="MF_01274"/>
    </source>
</evidence>
<proteinExistence type="inferred from homology"/>